<accession>A2RU67</accession>
<accession>Q49AF2</accession>
<accession>Q5CZ81</accession>
<accession>Q6ZUV7</accession>
<accession>Q9P261</accession>
<sequence>MATVLSRALKLPGKKSPDLGEYDPLTQADSDESEDDLVLNLQKNGGVKNGKSPLGEAPEPDSDAEVAEAAKPHLSEVTTEGYPSEPLGGLEQKAASSLVSYVRTSVFLLTLGISMILVLLCAFLIPCPPRDLHSTWSRHLGSQGGGDLSPLELADVNGDGLRDVLLSFVMSRNGSAVGVSRPAANLVCLSGMNGSTLWSSLLPEEARDITCLELMPGSLAETICLVTGTHKMLSAFNATSGKAIWTLNPNYLSNGTLAAPVVVLPDLDEDGVRDLVVLAIGELQPDLCFLLVSGRTGNPVGRPVKYNIVGVGNLIGPQVYITTNGAVYILFGFGNIQAVALRDIFVQAQNRDSSPPSLQIEEPEWEKRRSINLSELIDVYSDGVELLQMVKAPDSNCSNLLITTRQSLVLLRGQNLTPYWALRLQGLRSQPTPGYFTDDQTLDFLLQIQDGVGMKKMMVVDGDSGSIVWSYRAPCHMKETPATSAVTSDQKSVFLFWAEGLSAASPNSDIILGTEPPSLHHLYLLHPAFPSILLDLANTTGTVTASEVGINDLWKDAFYVTRTTGPSSEGHPAALVVSKLSLRWALMEGQMAQLQESTPKIGRGELRRFLSRIKFVEAPYEI</sequence>
<feature type="chain" id="PRO_0000288913" description="Protein FAM234B">
    <location>
        <begin position="1"/>
        <end position="622"/>
    </location>
</feature>
<feature type="transmembrane region" description="Helical" evidence="2">
    <location>
        <begin position="104"/>
        <end position="124"/>
    </location>
</feature>
<feature type="region of interest" description="Disordered" evidence="3">
    <location>
        <begin position="1"/>
        <end position="68"/>
    </location>
</feature>
<feature type="modified residue" description="Phosphoserine" evidence="6 7">
    <location>
        <position position="16"/>
    </location>
</feature>
<feature type="modified residue" description="Phosphothreonine" evidence="8">
    <location>
        <position position="26"/>
    </location>
</feature>
<feature type="modified residue" description="Phosphoserine" evidence="6 8">
    <location>
        <position position="30"/>
    </location>
</feature>
<feature type="modified residue" description="Phosphoserine" evidence="6 7">
    <location>
        <position position="33"/>
    </location>
</feature>
<feature type="modified residue" description="Phosphoserine" evidence="6">
    <location>
        <position position="62"/>
    </location>
</feature>
<feature type="sequence conflict" description="In Ref. 1; BAC86111." evidence="4" ref="1">
    <original>E</original>
    <variation>K</variation>
    <location>
        <position position="59"/>
    </location>
</feature>
<feature type="sequence conflict" description="In Ref. 3; AAH39267." evidence="4" ref="3">
    <original>E</original>
    <variation>K</variation>
    <location>
        <position position="91"/>
    </location>
</feature>
<feature type="sequence conflict" description="In Ref. 1; BAC86111." evidence="4" ref="1">
    <original>L</original>
    <variation>P</variation>
    <location>
        <position position="189"/>
    </location>
</feature>
<feature type="sequence conflict" description="In Ref. 2; CAI56785." evidence="4" ref="2">
    <original>D</original>
    <variation>N</variation>
    <location>
        <position position="450"/>
    </location>
</feature>
<protein>
    <recommendedName>
        <fullName>Protein FAM234B</fullName>
    </recommendedName>
</protein>
<name>F234B_HUMAN</name>
<proteinExistence type="evidence at protein level"/>
<reference key="1">
    <citation type="journal article" date="2004" name="Nat. Genet.">
        <title>Complete sequencing and characterization of 21,243 full-length human cDNAs.</title>
        <authorList>
            <person name="Ota T."/>
            <person name="Suzuki Y."/>
            <person name="Nishikawa T."/>
            <person name="Otsuki T."/>
            <person name="Sugiyama T."/>
            <person name="Irie R."/>
            <person name="Wakamatsu A."/>
            <person name="Hayashi K."/>
            <person name="Sato H."/>
            <person name="Nagai K."/>
            <person name="Kimura K."/>
            <person name="Makita H."/>
            <person name="Sekine M."/>
            <person name="Obayashi M."/>
            <person name="Nishi T."/>
            <person name="Shibahara T."/>
            <person name="Tanaka T."/>
            <person name="Ishii S."/>
            <person name="Yamamoto J."/>
            <person name="Saito K."/>
            <person name="Kawai Y."/>
            <person name="Isono Y."/>
            <person name="Nakamura Y."/>
            <person name="Nagahari K."/>
            <person name="Murakami K."/>
            <person name="Yasuda T."/>
            <person name="Iwayanagi T."/>
            <person name="Wagatsuma M."/>
            <person name="Shiratori A."/>
            <person name="Sudo H."/>
            <person name="Hosoiri T."/>
            <person name="Kaku Y."/>
            <person name="Kodaira H."/>
            <person name="Kondo H."/>
            <person name="Sugawara M."/>
            <person name="Takahashi M."/>
            <person name="Kanda K."/>
            <person name="Yokoi T."/>
            <person name="Furuya T."/>
            <person name="Kikkawa E."/>
            <person name="Omura Y."/>
            <person name="Abe K."/>
            <person name="Kamihara K."/>
            <person name="Katsuta N."/>
            <person name="Sato K."/>
            <person name="Tanikawa M."/>
            <person name="Yamazaki M."/>
            <person name="Ninomiya K."/>
            <person name="Ishibashi T."/>
            <person name="Yamashita H."/>
            <person name="Murakawa K."/>
            <person name="Fujimori K."/>
            <person name="Tanai H."/>
            <person name="Kimata M."/>
            <person name="Watanabe M."/>
            <person name="Hiraoka S."/>
            <person name="Chiba Y."/>
            <person name="Ishida S."/>
            <person name="Ono Y."/>
            <person name="Takiguchi S."/>
            <person name="Watanabe S."/>
            <person name="Yosida M."/>
            <person name="Hotuta T."/>
            <person name="Kusano J."/>
            <person name="Kanehori K."/>
            <person name="Takahashi-Fujii A."/>
            <person name="Hara H."/>
            <person name="Tanase T.-O."/>
            <person name="Nomura Y."/>
            <person name="Togiya S."/>
            <person name="Komai F."/>
            <person name="Hara R."/>
            <person name="Takeuchi K."/>
            <person name="Arita M."/>
            <person name="Imose N."/>
            <person name="Musashino K."/>
            <person name="Yuuki H."/>
            <person name="Oshima A."/>
            <person name="Sasaki N."/>
            <person name="Aotsuka S."/>
            <person name="Yoshikawa Y."/>
            <person name="Matsunawa H."/>
            <person name="Ichihara T."/>
            <person name="Shiohata N."/>
            <person name="Sano S."/>
            <person name="Moriya S."/>
            <person name="Momiyama H."/>
            <person name="Satoh N."/>
            <person name="Takami S."/>
            <person name="Terashima Y."/>
            <person name="Suzuki O."/>
            <person name="Nakagawa S."/>
            <person name="Senoh A."/>
            <person name="Mizoguchi H."/>
            <person name="Goto Y."/>
            <person name="Shimizu F."/>
            <person name="Wakebe H."/>
            <person name="Hishigaki H."/>
            <person name="Watanabe T."/>
            <person name="Sugiyama A."/>
            <person name="Takemoto M."/>
            <person name="Kawakami B."/>
            <person name="Yamazaki M."/>
            <person name="Watanabe K."/>
            <person name="Kumagai A."/>
            <person name="Itakura S."/>
            <person name="Fukuzumi Y."/>
            <person name="Fujimori Y."/>
            <person name="Komiyama M."/>
            <person name="Tashiro H."/>
            <person name="Tanigami A."/>
            <person name="Fujiwara T."/>
            <person name="Ono T."/>
            <person name="Yamada K."/>
            <person name="Fujii Y."/>
            <person name="Ozaki K."/>
            <person name="Hirao M."/>
            <person name="Ohmori Y."/>
            <person name="Kawabata A."/>
            <person name="Hikiji T."/>
            <person name="Kobatake N."/>
            <person name="Inagaki H."/>
            <person name="Ikema Y."/>
            <person name="Okamoto S."/>
            <person name="Okitani R."/>
            <person name="Kawakami T."/>
            <person name="Noguchi S."/>
            <person name="Itoh T."/>
            <person name="Shigeta K."/>
            <person name="Senba T."/>
            <person name="Matsumura K."/>
            <person name="Nakajima Y."/>
            <person name="Mizuno T."/>
            <person name="Morinaga M."/>
            <person name="Sasaki M."/>
            <person name="Togashi T."/>
            <person name="Oyama M."/>
            <person name="Hata H."/>
            <person name="Watanabe M."/>
            <person name="Komatsu T."/>
            <person name="Mizushima-Sugano J."/>
            <person name="Satoh T."/>
            <person name="Shirai Y."/>
            <person name="Takahashi Y."/>
            <person name="Nakagawa K."/>
            <person name="Okumura K."/>
            <person name="Nagase T."/>
            <person name="Nomura N."/>
            <person name="Kikuchi H."/>
            <person name="Masuho Y."/>
            <person name="Yamashita R."/>
            <person name="Nakai K."/>
            <person name="Yada T."/>
            <person name="Nakamura Y."/>
            <person name="Ohara O."/>
            <person name="Isogai T."/>
            <person name="Sugano S."/>
        </authorList>
    </citation>
    <scope>NUCLEOTIDE SEQUENCE [LARGE SCALE MRNA]</scope>
</reference>
<reference key="2">
    <citation type="journal article" date="2007" name="BMC Genomics">
        <title>The full-ORF clone resource of the German cDNA consortium.</title>
        <authorList>
            <person name="Bechtel S."/>
            <person name="Rosenfelder H."/>
            <person name="Duda A."/>
            <person name="Schmidt C.P."/>
            <person name="Ernst U."/>
            <person name="Wellenreuther R."/>
            <person name="Mehrle A."/>
            <person name="Schuster C."/>
            <person name="Bahr A."/>
            <person name="Bloecker H."/>
            <person name="Heubner D."/>
            <person name="Hoerlein A."/>
            <person name="Michel G."/>
            <person name="Wedler H."/>
            <person name="Koehrer K."/>
            <person name="Ottenwaelder B."/>
            <person name="Poustka A."/>
            <person name="Wiemann S."/>
            <person name="Schupp I."/>
        </authorList>
    </citation>
    <scope>NUCLEOTIDE SEQUENCE [LARGE SCALE MRNA]</scope>
    <source>
        <tissue>Amygdala</tissue>
    </source>
</reference>
<reference key="3">
    <citation type="journal article" date="2004" name="Genome Res.">
        <title>The status, quality, and expansion of the NIH full-length cDNA project: the Mammalian Gene Collection (MGC).</title>
        <authorList>
            <consortium name="The MGC Project Team"/>
        </authorList>
    </citation>
    <scope>NUCLEOTIDE SEQUENCE [LARGE SCALE MRNA]</scope>
    <source>
        <tissue>Brain</tissue>
    </source>
</reference>
<reference key="4">
    <citation type="journal article" date="2000" name="DNA Res.">
        <title>Prediction of the coding sequences of unidentified human genes. XVII. The complete sequences of 100 new cDNA clones from brain which code for large proteins in vitro.</title>
        <authorList>
            <person name="Nagase T."/>
            <person name="Kikuno R."/>
            <person name="Ishikawa K."/>
            <person name="Hirosawa M."/>
            <person name="Ohara O."/>
        </authorList>
    </citation>
    <scope>NUCLEOTIDE SEQUENCE [LARGE SCALE MRNA] OF 191-622</scope>
    <source>
        <tissue>Brain</tissue>
    </source>
</reference>
<reference key="5">
    <citation type="journal article" date="2008" name="Proc. Natl. Acad. Sci. U.S.A.">
        <title>A quantitative atlas of mitotic phosphorylation.</title>
        <authorList>
            <person name="Dephoure N."/>
            <person name="Zhou C."/>
            <person name="Villen J."/>
            <person name="Beausoleil S.A."/>
            <person name="Bakalarski C.E."/>
            <person name="Elledge S.J."/>
            <person name="Gygi S.P."/>
        </authorList>
    </citation>
    <scope>PHOSPHORYLATION [LARGE SCALE ANALYSIS] AT SER-16; SER-30; SER-33 AND SER-62</scope>
    <scope>IDENTIFICATION BY MASS SPECTROMETRY [LARGE SCALE ANALYSIS]</scope>
    <source>
        <tissue>Cervix carcinoma</tissue>
    </source>
</reference>
<reference key="6">
    <citation type="journal article" date="2009" name="Sci. Signal.">
        <title>Quantitative phosphoproteomic analysis of T cell receptor signaling reveals system-wide modulation of protein-protein interactions.</title>
        <authorList>
            <person name="Mayya V."/>
            <person name="Lundgren D.H."/>
            <person name="Hwang S.-I."/>
            <person name="Rezaul K."/>
            <person name="Wu L."/>
            <person name="Eng J.K."/>
            <person name="Rodionov V."/>
            <person name="Han D.K."/>
        </authorList>
    </citation>
    <scope>PHOSPHORYLATION [LARGE SCALE ANALYSIS] AT SER-16 AND SER-33</scope>
    <scope>IDENTIFICATION BY MASS SPECTROMETRY [LARGE SCALE ANALYSIS]</scope>
    <source>
        <tissue>Leukemic T-cell</tissue>
    </source>
</reference>
<reference key="7">
    <citation type="journal article" date="2011" name="Sci. Signal.">
        <title>System-wide temporal characterization of the proteome and phosphoproteome of human embryonic stem cell differentiation.</title>
        <authorList>
            <person name="Rigbolt K.T."/>
            <person name="Prokhorova T.A."/>
            <person name="Akimov V."/>
            <person name="Henningsen J."/>
            <person name="Johansen P.T."/>
            <person name="Kratchmarova I."/>
            <person name="Kassem M."/>
            <person name="Mann M."/>
            <person name="Olsen J.V."/>
            <person name="Blagoev B."/>
        </authorList>
    </citation>
    <scope>IDENTIFICATION BY MASS SPECTROMETRY [LARGE SCALE ANALYSIS]</scope>
</reference>
<reference key="8">
    <citation type="journal article" date="2014" name="J. Proteomics">
        <title>An enzyme assisted RP-RPLC approach for in-depth analysis of human liver phosphoproteome.</title>
        <authorList>
            <person name="Bian Y."/>
            <person name="Song C."/>
            <person name="Cheng K."/>
            <person name="Dong M."/>
            <person name="Wang F."/>
            <person name="Huang J."/>
            <person name="Sun D."/>
            <person name="Wang L."/>
            <person name="Ye M."/>
            <person name="Zou H."/>
        </authorList>
    </citation>
    <scope>PHOSPHORYLATION [LARGE SCALE ANALYSIS] AT THR-26 AND SER-30</scope>
    <scope>IDENTIFICATION BY MASS SPECTROMETRY [LARGE SCALE ANALYSIS]</scope>
    <source>
        <tissue>Liver</tissue>
    </source>
</reference>
<comment type="interaction">
    <interactant intactId="EBI-6911574">
        <id>A2RU67</id>
    </interactant>
    <interactant intactId="EBI-714396">
        <id>O14678</id>
        <label>ABCD4</label>
    </interactant>
    <organismsDiffer>false</organismsDiffer>
    <experiments>5</experiments>
</comment>
<comment type="subcellular location">
    <subcellularLocation>
        <location evidence="2">Membrane</location>
        <topology evidence="2">Single-pass membrane protein</topology>
    </subcellularLocation>
    <subcellularLocation>
        <location evidence="1">Golgi outpost</location>
    </subcellularLocation>
    <subcellularLocation>
        <location evidence="1">Cytoplasm</location>
        <location evidence="1">Cytoskeleton</location>
        <location evidence="1">Microtubule organizing center</location>
    </subcellularLocation>
    <text evidence="1">Localizes to the postsynaptic Golgi apparatus region, also named Golgi outpost, which shapes dendrite morphology by functioning as sites of acentrosomal microtubule nucleation.</text>
</comment>
<comment type="similarity">
    <text evidence="4">Belongs to the FAM234 family.</text>
</comment>
<gene>
    <name evidence="5" type="primary">FAM234B</name>
    <name type="synonym">KIAA1467</name>
</gene>
<organism>
    <name type="scientific">Homo sapiens</name>
    <name type="common">Human</name>
    <dbReference type="NCBI Taxonomy" id="9606"/>
    <lineage>
        <taxon>Eukaryota</taxon>
        <taxon>Metazoa</taxon>
        <taxon>Chordata</taxon>
        <taxon>Craniata</taxon>
        <taxon>Vertebrata</taxon>
        <taxon>Euteleostomi</taxon>
        <taxon>Mammalia</taxon>
        <taxon>Eutheria</taxon>
        <taxon>Euarchontoglires</taxon>
        <taxon>Primates</taxon>
        <taxon>Haplorrhini</taxon>
        <taxon>Catarrhini</taxon>
        <taxon>Hominidae</taxon>
        <taxon>Homo</taxon>
    </lineage>
</organism>
<evidence type="ECO:0000250" key="1">
    <source>
        <dbReference type="UniProtKB" id="D3ZWJ9"/>
    </source>
</evidence>
<evidence type="ECO:0000255" key="2"/>
<evidence type="ECO:0000256" key="3">
    <source>
        <dbReference type="SAM" id="MobiDB-lite"/>
    </source>
</evidence>
<evidence type="ECO:0000305" key="4"/>
<evidence type="ECO:0000312" key="5">
    <source>
        <dbReference type="HGNC" id="HGNC:29288"/>
    </source>
</evidence>
<evidence type="ECO:0007744" key="6">
    <source>
    </source>
</evidence>
<evidence type="ECO:0007744" key="7">
    <source>
    </source>
</evidence>
<evidence type="ECO:0007744" key="8">
    <source>
    </source>
</evidence>
<dbReference type="EMBL" id="AK125278">
    <property type="protein sequence ID" value="BAC86111.1"/>
    <property type="molecule type" value="mRNA"/>
</dbReference>
<dbReference type="EMBL" id="CR936647">
    <property type="protein sequence ID" value="CAI56785.1"/>
    <property type="molecule type" value="mRNA"/>
</dbReference>
<dbReference type="EMBL" id="BC039267">
    <property type="protein sequence ID" value="AAH39267.1"/>
    <property type="molecule type" value="mRNA"/>
</dbReference>
<dbReference type="EMBL" id="BC132772">
    <property type="protein sequence ID" value="AAI32773.1"/>
    <property type="molecule type" value="mRNA"/>
</dbReference>
<dbReference type="EMBL" id="BC132774">
    <property type="protein sequence ID" value="AAI32775.1"/>
    <property type="molecule type" value="mRNA"/>
</dbReference>
<dbReference type="EMBL" id="AB040900">
    <property type="protein sequence ID" value="BAA95991.1"/>
    <property type="molecule type" value="mRNA"/>
</dbReference>
<dbReference type="CCDS" id="CCDS31750.1"/>
<dbReference type="RefSeq" id="NP_065904.1">
    <property type="nucleotide sequence ID" value="NM_020853.2"/>
</dbReference>
<dbReference type="BioGRID" id="121660">
    <property type="interactions" value="78"/>
</dbReference>
<dbReference type="FunCoup" id="A2RU67">
    <property type="interactions" value="281"/>
</dbReference>
<dbReference type="IntAct" id="A2RU67">
    <property type="interactions" value="59"/>
</dbReference>
<dbReference type="STRING" id="9606.ENSP00000197268"/>
<dbReference type="GlyGen" id="A2RU67">
    <property type="glycosylation" value="5 sites, 3 N-linked glycans (3 sites)"/>
</dbReference>
<dbReference type="iPTMnet" id="A2RU67"/>
<dbReference type="PhosphoSitePlus" id="A2RU67"/>
<dbReference type="BioMuta" id="FAM234B"/>
<dbReference type="jPOST" id="A2RU67"/>
<dbReference type="MassIVE" id="A2RU67"/>
<dbReference type="PaxDb" id="9606-ENSP00000197268"/>
<dbReference type="PeptideAtlas" id="A2RU67"/>
<dbReference type="ProteomicsDB" id="502"/>
<dbReference type="Pumba" id="A2RU67"/>
<dbReference type="Antibodypedia" id="2254">
    <property type="antibodies" value="41 antibodies from 10 providers"/>
</dbReference>
<dbReference type="DNASU" id="57613"/>
<dbReference type="Ensembl" id="ENST00000197268.13">
    <property type="protein sequence ID" value="ENSP00000197268.8"/>
    <property type="gene ID" value="ENSG00000084444.14"/>
</dbReference>
<dbReference type="Ensembl" id="ENST00000416494.6">
    <property type="protein sequence ID" value="ENSP00000394063.2"/>
    <property type="gene ID" value="ENSG00000084444.14"/>
</dbReference>
<dbReference type="GeneID" id="57613"/>
<dbReference type="KEGG" id="hsa:57613"/>
<dbReference type="MANE-Select" id="ENST00000197268.13">
    <property type="protein sequence ID" value="ENSP00000197268.8"/>
    <property type="RefSeq nucleotide sequence ID" value="NM_020853.2"/>
    <property type="RefSeq protein sequence ID" value="NP_065904.1"/>
</dbReference>
<dbReference type="UCSC" id="uc001rbi.4">
    <property type="organism name" value="human"/>
</dbReference>
<dbReference type="AGR" id="HGNC:29288"/>
<dbReference type="CTD" id="57613"/>
<dbReference type="DisGeNET" id="57613"/>
<dbReference type="GeneCards" id="FAM234B"/>
<dbReference type="HGNC" id="HGNC:29288">
    <property type="gene designation" value="FAM234B"/>
</dbReference>
<dbReference type="HPA" id="ENSG00000084444">
    <property type="expression patterns" value="Tissue enhanced (brain)"/>
</dbReference>
<dbReference type="MIM" id="617837">
    <property type="type" value="gene"/>
</dbReference>
<dbReference type="neXtProt" id="NX_A2RU67"/>
<dbReference type="OpenTargets" id="ENSG00000084444"/>
<dbReference type="PharmGKB" id="PA128395790"/>
<dbReference type="VEuPathDB" id="HostDB:ENSG00000084444"/>
<dbReference type="eggNOG" id="ENOG502QVNA">
    <property type="taxonomic scope" value="Eukaryota"/>
</dbReference>
<dbReference type="GeneTree" id="ENSGT00530000063694"/>
<dbReference type="HOGENOM" id="CLU_029706_0_0_1"/>
<dbReference type="InParanoid" id="A2RU67"/>
<dbReference type="OMA" id="FFQHSAN"/>
<dbReference type="OrthoDB" id="9941159at2759"/>
<dbReference type="PAN-GO" id="A2RU67">
    <property type="GO annotations" value="0 GO annotations based on evolutionary models"/>
</dbReference>
<dbReference type="PhylomeDB" id="A2RU67"/>
<dbReference type="TreeFam" id="TF327203"/>
<dbReference type="PathwayCommons" id="A2RU67"/>
<dbReference type="SignaLink" id="A2RU67"/>
<dbReference type="BioGRID-ORCS" id="57613">
    <property type="hits" value="11 hits in 1138 CRISPR screens"/>
</dbReference>
<dbReference type="ChiTaRS" id="FAM234B">
    <property type="organism name" value="human"/>
</dbReference>
<dbReference type="GenomeRNAi" id="57613"/>
<dbReference type="Pharos" id="A2RU67">
    <property type="development level" value="Tdark"/>
</dbReference>
<dbReference type="PRO" id="PR:A2RU67"/>
<dbReference type="Proteomes" id="UP000005640">
    <property type="component" value="Chromosome 12"/>
</dbReference>
<dbReference type="RNAct" id="A2RU67">
    <property type="molecule type" value="protein"/>
</dbReference>
<dbReference type="Bgee" id="ENSG00000084444">
    <property type="expression patterns" value="Expressed in lateral nuclear group of thalamus and 193 other cell types or tissues"/>
</dbReference>
<dbReference type="ExpressionAtlas" id="A2RU67">
    <property type="expression patterns" value="baseline and differential"/>
</dbReference>
<dbReference type="GO" id="GO:0005794">
    <property type="term" value="C:Golgi apparatus"/>
    <property type="evidence" value="ECO:0007669"/>
    <property type="project" value="UniProtKB-KW"/>
</dbReference>
<dbReference type="GO" id="GO:0016020">
    <property type="term" value="C:membrane"/>
    <property type="evidence" value="ECO:0007669"/>
    <property type="project" value="UniProtKB-SubCell"/>
</dbReference>
<dbReference type="GO" id="GO:0005815">
    <property type="term" value="C:microtubule organizing center"/>
    <property type="evidence" value="ECO:0007669"/>
    <property type="project" value="UniProtKB-SubCell"/>
</dbReference>
<dbReference type="InterPro" id="IPR045232">
    <property type="entry name" value="FAM234"/>
</dbReference>
<dbReference type="InterPro" id="IPR055409">
    <property type="entry name" value="FAM234A_B_beta-prop"/>
</dbReference>
<dbReference type="InterPro" id="IPR011047">
    <property type="entry name" value="Quinoprotein_ADH-like_sf"/>
</dbReference>
<dbReference type="PANTHER" id="PTHR21419">
    <property type="match status" value="1"/>
</dbReference>
<dbReference type="PANTHER" id="PTHR21419:SF25">
    <property type="entry name" value="PROTEIN FAM234B"/>
    <property type="match status" value="1"/>
</dbReference>
<dbReference type="Pfam" id="PF23727">
    <property type="entry name" value="Beta-prop_FAM234A_B"/>
    <property type="match status" value="1"/>
</dbReference>
<dbReference type="SUPFAM" id="SSF50998">
    <property type="entry name" value="Quinoprotein alcohol dehydrogenase-like"/>
    <property type="match status" value="1"/>
</dbReference>
<keyword id="KW-0963">Cytoplasm</keyword>
<keyword id="KW-0206">Cytoskeleton</keyword>
<keyword id="KW-0333">Golgi apparatus</keyword>
<keyword id="KW-0472">Membrane</keyword>
<keyword id="KW-0597">Phosphoprotein</keyword>
<keyword id="KW-1267">Proteomics identification</keyword>
<keyword id="KW-1185">Reference proteome</keyword>
<keyword id="KW-0812">Transmembrane</keyword>
<keyword id="KW-1133">Transmembrane helix</keyword>